<gene>
    <name evidence="1" type="primary">metG</name>
    <name type="ordered locus">PFL_4844</name>
</gene>
<reference key="1">
    <citation type="journal article" date="2005" name="Nat. Biotechnol.">
        <title>Complete genome sequence of the plant commensal Pseudomonas fluorescens Pf-5.</title>
        <authorList>
            <person name="Paulsen I.T."/>
            <person name="Press C.M."/>
            <person name="Ravel J."/>
            <person name="Kobayashi D.Y."/>
            <person name="Myers G.S.A."/>
            <person name="Mavrodi D.V."/>
            <person name="DeBoy R.T."/>
            <person name="Seshadri R."/>
            <person name="Ren Q."/>
            <person name="Madupu R."/>
            <person name="Dodson R.J."/>
            <person name="Durkin A.S."/>
            <person name="Brinkac L.M."/>
            <person name="Daugherty S.C."/>
            <person name="Sullivan S.A."/>
            <person name="Rosovitz M.J."/>
            <person name="Gwinn M.L."/>
            <person name="Zhou L."/>
            <person name="Schneider D.J."/>
            <person name="Cartinhour S.W."/>
            <person name="Nelson W.C."/>
            <person name="Weidman J."/>
            <person name="Watkins K."/>
            <person name="Tran K."/>
            <person name="Khouri H."/>
            <person name="Pierson E.A."/>
            <person name="Pierson L.S. III"/>
            <person name="Thomashow L.S."/>
            <person name="Loper J.E."/>
        </authorList>
    </citation>
    <scope>NUCLEOTIDE SEQUENCE [LARGE SCALE GENOMIC DNA]</scope>
    <source>
        <strain>ATCC BAA-477 / NRRL B-23932 / Pf-5</strain>
    </source>
</reference>
<protein>
    <recommendedName>
        <fullName evidence="1">Methionine--tRNA ligase</fullName>
        <ecNumber evidence="1">6.1.1.10</ecNumber>
    </recommendedName>
    <alternativeName>
        <fullName evidence="1">Methionyl-tRNA synthetase</fullName>
        <shortName evidence="1">MetRS</shortName>
    </alternativeName>
</protein>
<name>SYM_PSEF5</name>
<evidence type="ECO:0000255" key="1">
    <source>
        <dbReference type="HAMAP-Rule" id="MF_00098"/>
    </source>
</evidence>
<organism>
    <name type="scientific">Pseudomonas fluorescens (strain ATCC BAA-477 / NRRL B-23932 / Pf-5)</name>
    <dbReference type="NCBI Taxonomy" id="220664"/>
    <lineage>
        <taxon>Bacteria</taxon>
        <taxon>Pseudomonadati</taxon>
        <taxon>Pseudomonadota</taxon>
        <taxon>Gammaproteobacteria</taxon>
        <taxon>Pseudomonadales</taxon>
        <taxon>Pseudomonadaceae</taxon>
        <taxon>Pseudomonas</taxon>
    </lineage>
</organism>
<feature type="chain" id="PRO_0000331870" description="Methionine--tRNA ligase">
    <location>
        <begin position="1"/>
        <end position="681"/>
    </location>
</feature>
<feature type="domain" description="tRNA-binding" evidence="1">
    <location>
        <begin position="579"/>
        <end position="681"/>
    </location>
</feature>
<feature type="short sequence motif" description="'HIGH' region">
    <location>
        <begin position="14"/>
        <end position="24"/>
    </location>
</feature>
<feature type="short sequence motif" description="'KMSKS' region">
    <location>
        <begin position="331"/>
        <end position="335"/>
    </location>
</feature>
<feature type="binding site" evidence="1">
    <location>
        <position position="145"/>
    </location>
    <ligand>
        <name>Zn(2+)</name>
        <dbReference type="ChEBI" id="CHEBI:29105"/>
    </ligand>
</feature>
<feature type="binding site" evidence="1">
    <location>
        <position position="148"/>
    </location>
    <ligand>
        <name>Zn(2+)</name>
        <dbReference type="ChEBI" id="CHEBI:29105"/>
    </ligand>
</feature>
<feature type="binding site" evidence="1">
    <location>
        <position position="158"/>
    </location>
    <ligand>
        <name>Zn(2+)</name>
        <dbReference type="ChEBI" id="CHEBI:29105"/>
    </ligand>
</feature>
<feature type="binding site" evidence="1">
    <location>
        <position position="161"/>
    </location>
    <ligand>
        <name>Zn(2+)</name>
        <dbReference type="ChEBI" id="CHEBI:29105"/>
    </ligand>
</feature>
<feature type="binding site" evidence="1">
    <location>
        <position position="334"/>
    </location>
    <ligand>
        <name>ATP</name>
        <dbReference type="ChEBI" id="CHEBI:30616"/>
    </ligand>
</feature>
<dbReference type="EC" id="6.1.1.10" evidence="1"/>
<dbReference type="EMBL" id="CP000076">
    <property type="protein sequence ID" value="AAY94074.1"/>
    <property type="molecule type" value="Genomic_DNA"/>
</dbReference>
<dbReference type="RefSeq" id="WP_011063098.1">
    <property type="nucleotide sequence ID" value="NC_004129.6"/>
</dbReference>
<dbReference type="SMR" id="Q4K758"/>
<dbReference type="STRING" id="220664.PFL_4844"/>
<dbReference type="KEGG" id="pfl:PFL_4844"/>
<dbReference type="PATRIC" id="fig|220664.5.peg.4958"/>
<dbReference type="eggNOG" id="COG0073">
    <property type="taxonomic scope" value="Bacteria"/>
</dbReference>
<dbReference type="eggNOG" id="COG0143">
    <property type="taxonomic scope" value="Bacteria"/>
</dbReference>
<dbReference type="HOGENOM" id="CLU_009710_7_0_6"/>
<dbReference type="Proteomes" id="UP000008540">
    <property type="component" value="Chromosome"/>
</dbReference>
<dbReference type="GO" id="GO:0005829">
    <property type="term" value="C:cytosol"/>
    <property type="evidence" value="ECO:0007669"/>
    <property type="project" value="TreeGrafter"/>
</dbReference>
<dbReference type="GO" id="GO:0005524">
    <property type="term" value="F:ATP binding"/>
    <property type="evidence" value="ECO:0007669"/>
    <property type="project" value="UniProtKB-UniRule"/>
</dbReference>
<dbReference type="GO" id="GO:0046872">
    <property type="term" value="F:metal ion binding"/>
    <property type="evidence" value="ECO:0007669"/>
    <property type="project" value="UniProtKB-KW"/>
</dbReference>
<dbReference type="GO" id="GO:0004825">
    <property type="term" value="F:methionine-tRNA ligase activity"/>
    <property type="evidence" value="ECO:0007669"/>
    <property type="project" value="UniProtKB-UniRule"/>
</dbReference>
<dbReference type="GO" id="GO:0000049">
    <property type="term" value="F:tRNA binding"/>
    <property type="evidence" value="ECO:0007669"/>
    <property type="project" value="UniProtKB-KW"/>
</dbReference>
<dbReference type="GO" id="GO:0006431">
    <property type="term" value="P:methionyl-tRNA aminoacylation"/>
    <property type="evidence" value="ECO:0007669"/>
    <property type="project" value="UniProtKB-UniRule"/>
</dbReference>
<dbReference type="CDD" id="cd07957">
    <property type="entry name" value="Anticodon_Ia_Met"/>
    <property type="match status" value="1"/>
</dbReference>
<dbReference type="CDD" id="cd00814">
    <property type="entry name" value="MetRS_core"/>
    <property type="match status" value="1"/>
</dbReference>
<dbReference type="CDD" id="cd02800">
    <property type="entry name" value="tRNA_bind_EcMetRS_like"/>
    <property type="match status" value="1"/>
</dbReference>
<dbReference type="FunFam" id="1.10.730.10:FF:000005">
    <property type="entry name" value="Methionine--tRNA ligase"/>
    <property type="match status" value="1"/>
</dbReference>
<dbReference type="FunFam" id="2.20.28.20:FF:000001">
    <property type="entry name" value="Methionine--tRNA ligase"/>
    <property type="match status" value="1"/>
</dbReference>
<dbReference type="FunFam" id="2.40.50.140:FF:000042">
    <property type="entry name" value="Methionine--tRNA ligase"/>
    <property type="match status" value="1"/>
</dbReference>
<dbReference type="Gene3D" id="3.40.50.620">
    <property type="entry name" value="HUPs"/>
    <property type="match status" value="1"/>
</dbReference>
<dbReference type="Gene3D" id="1.10.730.10">
    <property type="entry name" value="Isoleucyl-tRNA Synthetase, Domain 1"/>
    <property type="match status" value="1"/>
</dbReference>
<dbReference type="Gene3D" id="2.20.28.20">
    <property type="entry name" value="Methionyl-tRNA synthetase, Zn-domain"/>
    <property type="match status" value="1"/>
</dbReference>
<dbReference type="Gene3D" id="2.40.50.140">
    <property type="entry name" value="Nucleic acid-binding proteins"/>
    <property type="match status" value="1"/>
</dbReference>
<dbReference type="HAMAP" id="MF_00098">
    <property type="entry name" value="Met_tRNA_synth_type1"/>
    <property type="match status" value="1"/>
</dbReference>
<dbReference type="InterPro" id="IPR001412">
    <property type="entry name" value="aa-tRNA-synth_I_CS"/>
</dbReference>
<dbReference type="InterPro" id="IPR041872">
    <property type="entry name" value="Anticodon_Met"/>
</dbReference>
<dbReference type="InterPro" id="IPR004495">
    <property type="entry name" value="Met-tRNA-synth_bsu_C"/>
</dbReference>
<dbReference type="InterPro" id="IPR023458">
    <property type="entry name" value="Met-tRNA_ligase_1"/>
</dbReference>
<dbReference type="InterPro" id="IPR014758">
    <property type="entry name" value="Met-tRNA_synth"/>
</dbReference>
<dbReference type="InterPro" id="IPR015413">
    <property type="entry name" value="Methionyl/Leucyl_tRNA_Synth"/>
</dbReference>
<dbReference type="InterPro" id="IPR033911">
    <property type="entry name" value="MetRS_core"/>
</dbReference>
<dbReference type="InterPro" id="IPR029038">
    <property type="entry name" value="MetRS_Zn"/>
</dbReference>
<dbReference type="InterPro" id="IPR012340">
    <property type="entry name" value="NA-bd_OB-fold"/>
</dbReference>
<dbReference type="InterPro" id="IPR014729">
    <property type="entry name" value="Rossmann-like_a/b/a_fold"/>
</dbReference>
<dbReference type="InterPro" id="IPR002547">
    <property type="entry name" value="tRNA-bd_dom"/>
</dbReference>
<dbReference type="InterPro" id="IPR009080">
    <property type="entry name" value="tRNAsynth_Ia_anticodon-bd"/>
</dbReference>
<dbReference type="NCBIfam" id="TIGR00398">
    <property type="entry name" value="metG"/>
    <property type="match status" value="1"/>
</dbReference>
<dbReference type="NCBIfam" id="TIGR00399">
    <property type="entry name" value="metG_C_term"/>
    <property type="match status" value="1"/>
</dbReference>
<dbReference type="NCBIfam" id="NF001100">
    <property type="entry name" value="PRK00133.1"/>
    <property type="match status" value="1"/>
</dbReference>
<dbReference type="PANTHER" id="PTHR45765">
    <property type="entry name" value="METHIONINE--TRNA LIGASE"/>
    <property type="match status" value="1"/>
</dbReference>
<dbReference type="PANTHER" id="PTHR45765:SF1">
    <property type="entry name" value="METHIONINE--TRNA LIGASE, CYTOPLASMIC"/>
    <property type="match status" value="1"/>
</dbReference>
<dbReference type="Pfam" id="PF09334">
    <property type="entry name" value="tRNA-synt_1g"/>
    <property type="match status" value="1"/>
</dbReference>
<dbReference type="Pfam" id="PF01588">
    <property type="entry name" value="tRNA_bind"/>
    <property type="match status" value="1"/>
</dbReference>
<dbReference type="PRINTS" id="PR01041">
    <property type="entry name" value="TRNASYNTHMET"/>
</dbReference>
<dbReference type="SUPFAM" id="SSF47323">
    <property type="entry name" value="Anticodon-binding domain of a subclass of class I aminoacyl-tRNA synthetases"/>
    <property type="match status" value="1"/>
</dbReference>
<dbReference type="SUPFAM" id="SSF57770">
    <property type="entry name" value="Methionyl-tRNA synthetase (MetRS), Zn-domain"/>
    <property type="match status" value="1"/>
</dbReference>
<dbReference type="SUPFAM" id="SSF50249">
    <property type="entry name" value="Nucleic acid-binding proteins"/>
    <property type="match status" value="1"/>
</dbReference>
<dbReference type="SUPFAM" id="SSF52374">
    <property type="entry name" value="Nucleotidylyl transferase"/>
    <property type="match status" value="1"/>
</dbReference>
<dbReference type="PROSITE" id="PS00178">
    <property type="entry name" value="AA_TRNA_LIGASE_I"/>
    <property type="match status" value="1"/>
</dbReference>
<dbReference type="PROSITE" id="PS50886">
    <property type="entry name" value="TRBD"/>
    <property type="match status" value="1"/>
</dbReference>
<accession>Q4K758</accession>
<comment type="function">
    <text evidence="1">Is required not only for elongation of protein synthesis but also for the initiation of all mRNA translation through initiator tRNA(fMet) aminoacylation.</text>
</comment>
<comment type="catalytic activity">
    <reaction evidence="1">
        <text>tRNA(Met) + L-methionine + ATP = L-methionyl-tRNA(Met) + AMP + diphosphate</text>
        <dbReference type="Rhea" id="RHEA:13481"/>
        <dbReference type="Rhea" id="RHEA-COMP:9667"/>
        <dbReference type="Rhea" id="RHEA-COMP:9698"/>
        <dbReference type="ChEBI" id="CHEBI:30616"/>
        <dbReference type="ChEBI" id="CHEBI:33019"/>
        <dbReference type="ChEBI" id="CHEBI:57844"/>
        <dbReference type="ChEBI" id="CHEBI:78442"/>
        <dbReference type="ChEBI" id="CHEBI:78530"/>
        <dbReference type="ChEBI" id="CHEBI:456215"/>
        <dbReference type="EC" id="6.1.1.10"/>
    </reaction>
</comment>
<comment type="cofactor">
    <cofactor evidence="1">
        <name>Zn(2+)</name>
        <dbReference type="ChEBI" id="CHEBI:29105"/>
    </cofactor>
    <text evidence="1">Binds 1 zinc ion per subunit.</text>
</comment>
<comment type="subunit">
    <text evidence="1">Homodimer.</text>
</comment>
<comment type="subcellular location">
    <subcellularLocation>
        <location evidence="1">Cytoplasm</location>
    </subcellularLocation>
</comment>
<comment type="similarity">
    <text evidence="1">Belongs to the class-I aminoacyl-tRNA synthetase family. MetG type 1 subfamily.</text>
</comment>
<sequence>MSEPRKILVTSALPYANGSIHLGHMLEYIQTDMWVRFQKLRGNQCIYVCADDAHGSAIMLRAEKEGITPEQLIANVQAEHCADFAEFLVDFDNFHSTHAEENRELSSQIYLKLRDAGHIATRSITQYFDPEKKMFLADRFIKGTCPKCGTEDQYGDNCEKCGATYAPTDLKDPKSAISGATPVLKDSQHFFFKLPDFQQMLQSWTRSGTLQDAVANKIAEWLDAGLQQWDISRDAPYFGFEIPDEPGKYFYVWLDAPIGYMASFKNLCSRRPELDFDAFWGKDSTAELYHFIGKDIVNFHALFWPAMLEGAGYRKPTGINVHGYLTVNGQKMSKSRGTFIKARTYLEHLSPEYLRYYYASKLGRGVDDLDLNLEDFVQKVNSDLVGKVVNIASRCAGFIHKGNAGVMVDSNAAPELTEAFLAAAPSIADAYEARDFARAMREIMGLADRANAWIADKAPWSLNKQEGKQDEVQAICATGIILFRQLVIFLKPVLPLLAADAEAFLNVAPLTWNDHQQLLANHQLNKFKPLMTRIDPVKVQAMTDASKEDLAASQTDTGGPKGNGELVKDPLSAEIDFDAFAAIDLRVALIVKAEAVEGADKLLRLTLDIGDEQRNVFSGIKSAYPDPSKLDGRLTMMIANLKPRKMKFGISEGMVMAAGPGGEEIYLLSPDSGAKPGQRIK</sequence>
<proteinExistence type="inferred from homology"/>
<keyword id="KW-0030">Aminoacyl-tRNA synthetase</keyword>
<keyword id="KW-0067">ATP-binding</keyword>
<keyword id="KW-0963">Cytoplasm</keyword>
<keyword id="KW-0436">Ligase</keyword>
<keyword id="KW-0479">Metal-binding</keyword>
<keyword id="KW-0547">Nucleotide-binding</keyword>
<keyword id="KW-0648">Protein biosynthesis</keyword>
<keyword id="KW-0694">RNA-binding</keyword>
<keyword id="KW-0820">tRNA-binding</keyword>
<keyword id="KW-0862">Zinc</keyword>